<name>IHFA_SINMW</name>
<accession>A6U7Q6</accession>
<organism>
    <name type="scientific">Sinorhizobium medicae (strain WSM419)</name>
    <name type="common">Ensifer medicae</name>
    <dbReference type="NCBI Taxonomy" id="366394"/>
    <lineage>
        <taxon>Bacteria</taxon>
        <taxon>Pseudomonadati</taxon>
        <taxon>Pseudomonadota</taxon>
        <taxon>Alphaproteobacteria</taxon>
        <taxon>Hyphomicrobiales</taxon>
        <taxon>Rhizobiaceae</taxon>
        <taxon>Sinorhizobium/Ensifer group</taxon>
        <taxon>Sinorhizobium</taxon>
    </lineage>
</organism>
<keyword id="KW-0233">DNA recombination</keyword>
<keyword id="KW-0238">DNA-binding</keyword>
<keyword id="KW-0804">Transcription</keyword>
<keyword id="KW-0805">Transcription regulation</keyword>
<keyword id="KW-0810">Translation regulation</keyword>
<evidence type="ECO:0000255" key="1">
    <source>
        <dbReference type="HAMAP-Rule" id="MF_00380"/>
    </source>
</evidence>
<proteinExistence type="inferred from homology"/>
<comment type="function">
    <text evidence="1">This protein is one of the two subunits of integration host factor, a specific DNA-binding protein that functions in genetic recombination as well as in transcriptional and translational control.</text>
</comment>
<comment type="subunit">
    <text evidence="1">Heterodimer of an alpha and a beta chain.</text>
</comment>
<comment type="similarity">
    <text evidence="1">Belongs to the bacterial histone-like protein family.</text>
</comment>
<reference key="1">
    <citation type="submission" date="2007-06" db="EMBL/GenBank/DDBJ databases">
        <title>Complete sequence of Sinorhizobium medicae WSM419 chromosome.</title>
        <authorList>
            <consortium name="US DOE Joint Genome Institute"/>
            <person name="Copeland A."/>
            <person name="Lucas S."/>
            <person name="Lapidus A."/>
            <person name="Barry K."/>
            <person name="Glavina del Rio T."/>
            <person name="Dalin E."/>
            <person name="Tice H."/>
            <person name="Pitluck S."/>
            <person name="Chain P."/>
            <person name="Malfatti S."/>
            <person name="Shin M."/>
            <person name="Vergez L."/>
            <person name="Schmutz J."/>
            <person name="Larimer F."/>
            <person name="Land M."/>
            <person name="Hauser L."/>
            <person name="Kyrpides N."/>
            <person name="Mikhailova N."/>
            <person name="Reeve W.G."/>
            <person name="Richardson P."/>
        </authorList>
    </citation>
    <scope>NUCLEOTIDE SEQUENCE [LARGE SCALE GENOMIC DNA]</scope>
    <source>
        <strain>WSM419</strain>
    </source>
</reference>
<feature type="chain" id="PRO_1000060574" description="Integration host factor subunit alpha">
    <location>
        <begin position="1"/>
        <end position="112"/>
    </location>
</feature>
<gene>
    <name evidence="1" type="primary">ihfA</name>
    <name evidence="1" type="synonym">himA</name>
    <name type="ordered locus">Smed_0830</name>
</gene>
<sequence>MSGKTVTRADLAESVFRKVGLSRTESAELVETVIDEICNAIVRGESVKLSSFATFQVRDKNERIGRNPKTGEEVPISPRRVMTFKASNVLKQRVLKAHLSRKSKLKPSNPAG</sequence>
<dbReference type="EMBL" id="CP000738">
    <property type="protein sequence ID" value="ABR59686.1"/>
    <property type="molecule type" value="Genomic_DNA"/>
</dbReference>
<dbReference type="RefSeq" id="WP_003529278.1">
    <property type="nucleotide sequence ID" value="NC_009636.1"/>
</dbReference>
<dbReference type="RefSeq" id="YP_001326521.1">
    <property type="nucleotide sequence ID" value="NC_009636.1"/>
</dbReference>
<dbReference type="SMR" id="A6U7Q6"/>
<dbReference type="STRING" id="366394.Smed_0830"/>
<dbReference type="KEGG" id="smd:Smed_0830"/>
<dbReference type="PATRIC" id="fig|366394.8.peg.3944"/>
<dbReference type="eggNOG" id="COG0776">
    <property type="taxonomic scope" value="Bacteria"/>
</dbReference>
<dbReference type="HOGENOM" id="CLU_105066_1_1_5"/>
<dbReference type="OrthoDB" id="9797747at2"/>
<dbReference type="Proteomes" id="UP000001108">
    <property type="component" value="Chromosome"/>
</dbReference>
<dbReference type="GO" id="GO:0005829">
    <property type="term" value="C:cytosol"/>
    <property type="evidence" value="ECO:0007669"/>
    <property type="project" value="TreeGrafter"/>
</dbReference>
<dbReference type="GO" id="GO:0003677">
    <property type="term" value="F:DNA binding"/>
    <property type="evidence" value="ECO:0007669"/>
    <property type="project" value="UniProtKB-UniRule"/>
</dbReference>
<dbReference type="GO" id="GO:0030527">
    <property type="term" value="F:structural constituent of chromatin"/>
    <property type="evidence" value="ECO:0007669"/>
    <property type="project" value="InterPro"/>
</dbReference>
<dbReference type="GO" id="GO:0006310">
    <property type="term" value="P:DNA recombination"/>
    <property type="evidence" value="ECO:0007669"/>
    <property type="project" value="UniProtKB-UniRule"/>
</dbReference>
<dbReference type="GO" id="GO:0009893">
    <property type="term" value="P:positive regulation of metabolic process"/>
    <property type="evidence" value="ECO:0007669"/>
    <property type="project" value="UniProtKB-ARBA"/>
</dbReference>
<dbReference type="GO" id="GO:0006355">
    <property type="term" value="P:regulation of DNA-templated transcription"/>
    <property type="evidence" value="ECO:0007669"/>
    <property type="project" value="UniProtKB-UniRule"/>
</dbReference>
<dbReference type="GO" id="GO:0006417">
    <property type="term" value="P:regulation of translation"/>
    <property type="evidence" value="ECO:0007669"/>
    <property type="project" value="UniProtKB-UniRule"/>
</dbReference>
<dbReference type="CDD" id="cd13835">
    <property type="entry name" value="IHF_A"/>
    <property type="match status" value="1"/>
</dbReference>
<dbReference type="Gene3D" id="4.10.520.10">
    <property type="entry name" value="IHF-like DNA-binding proteins"/>
    <property type="match status" value="1"/>
</dbReference>
<dbReference type="HAMAP" id="MF_00380">
    <property type="entry name" value="IHF_alpha"/>
    <property type="match status" value="1"/>
</dbReference>
<dbReference type="InterPro" id="IPR000119">
    <property type="entry name" value="Hist_DNA-bd"/>
</dbReference>
<dbReference type="InterPro" id="IPR020816">
    <property type="entry name" value="Histone-like_DNA-bd_CS"/>
</dbReference>
<dbReference type="InterPro" id="IPR010992">
    <property type="entry name" value="IHF-like_DNA-bd_dom_sf"/>
</dbReference>
<dbReference type="InterPro" id="IPR005684">
    <property type="entry name" value="IHF_alpha"/>
</dbReference>
<dbReference type="NCBIfam" id="TIGR00987">
    <property type="entry name" value="himA"/>
    <property type="match status" value="1"/>
</dbReference>
<dbReference type="NCBIfam" id="NF001401">
    <property type="entry name" value="PRK00285.1"/>
    <property type="match status" value="1"/>
</dbReference>
<dbReference type="PANTHER" id="PTHR33175">
    <property type="entry name" value="DNA-BINDING PROTEIN HU"/>
    <property type="match status" value="1"/>
</dbReference>
<dbReference type="PANTHER" id="PTHR33175:SF2">
    <property type="entry name" value="INTEGRATION HOST FACTOR SUBUNIT ALPHA"/>
    <property type="match status" value="1"/>
</dbReference>
<dbReference type="Pfam" id="PF00216">
    <property type="entry name" value="Bac_DNA_binding"/>
    <property type="match status" value="1"/>
</dbReference>
<dbReference type="PRINTS" id="PR01727">
    <property type="entry name" value="DNABINDINGHU"/>
</dbReference>
<dbReference type="SMART" id="SM00411">
    <property type="entry name" value="BHL"/>
    <property type="match status" value="1"/>
</dbReference>
<dbReference type="SUPFAM" id="SSF47729">
    <property type="entry name" value="IHF-like DNA-binding proteins"/>
    <property type="match status" value="1"/>
</dbReference>
<dbReference type="PROSITE" id="PS00045">
    <property type="entry name" value="HISTONE_LIKE"/>
    <property type="match status" value="1"/>
</dbReference>
<protein>
    <recommendedName>
        <fullName evidence="1">Integration host factor subunit alpha</fullName>
        <shortName evidence="1">IHF-alpha</shortName>
    </recommendedName>
</protein>